<accession>Q9FHZ3</accession>
<keyword id="KW-0539">Nucleus</keyword>
<keyword id="KW-0597">Phosphoprotein</keyword>
<keyword id="KW-1185">Reference proteome</keyword>
<protein>
    <recommendedName>
        <fullName evidence="6">VQ motif-containing protein 33</fullName>
        <shortName evidence="6">AtVQ33</shortName>
    </recommendedName>
    <alternativeName>
        <fullName evidence="7">MPK3/6-targeted VQ-motif-containing protein 3</fullName>
    </alternativeName>
</protein>
<comment type="function">
    <text evidence="3">May modulate WRKY transcription factor activities.</text>
</comment>
<comment type="subcellular location">
    <subcellularLocation>
        <location evidence="3">Nucleus</location>
    </subcellularLocation>
</comment>
<comment type="PTM">
    <text evidence="5">Phosphorylated on serine and threonine residues by MPK6.</text>
</comment>
<dbReference type="EMBL" id="AB017066">
    <property type="protein sequence ID" value="BAB09555.1"/>
    <property type="molecule type" value="Genomic_DNA"/>
</dbReference>
<dbReference type="EMBL" id="CP002688">
    <property type="protein sequence ID" value="AED96411.1"/>
    <property type="molecule type" value="Genomic_DNA"/>
</dbReference>
<dbReference type="EMBL" id="AF372918">
    <property type="protein sequence ID" value="AAK49634.1"/>
    <property type="molecule type" value="mRNA"/>
</dbReference>
<dbReference type="EMBL" id="AY127951">
    <property type="protein sequence ID" value="AAM91050.1"/>
    <property type="molecule type" value="mRNA"/>
</dbReference>
<dbReference type="RefSeq" id="NP_200194.1">
    <property type="nucleotide sequence ID" value="NM_124762.3"/>
</dbReference>
<dbReference type="STRING" id="3702.Q9FHZ3"/>
<dbReference type="iPTMnet" id="Q9FHZ3"/>
<dbReference type="PaxDb" id="3702-AT5G53830.1"/>
<dbReference type="ProteomicsDB" id="242753"/>
<dbReference type="EnsemblPlants" id="AT5G53830.1">
    <property type="protein sequence ID" value="AT5G53830.1"/>
    <property type="gene ID" value="AT5G53830"/>
</dbReference>
<dbReference type="GeneID" id="835464"/>
<dbReference type="Gramene" id="AT5G53830.1">
    <property type="protein sequence ID" value="AT5G53830.1"/>
    <property type="gene ID" value="AT5G53830"/>
</dbReference>
<dbReference type="KEGG" id="ath:AT5G53830"/>
<dbReference type="Araport" id="AT5G53830"/>
<dbReference type="TAIR" id="AT5G53830">
    <property type="gene designation" value="MVQ3"/>
</dbReference>
<dbReference type="eggNOG" id="ENOG502RIDK">
    <property type="taxonomic scope" value="Eukaryota"/>
</dbReference>
<dbReference type="HOGENOM" id="CLU_069496_0_0_1"/>
<dbReference type="InParanoid" id="Q9FHZ3"/>
<dbReference type="OMA" id="NMFAKND"/>
<dbReference type="OrthoDB" id="784396at2759"/>
<dbReference type="PhylomeDB" id="Q9FHZ3"/>
<dbReference type="PRO" id="PR:Q9FHZ3"/>
<dbReference type="Proteomes" id="UP000006548">
    <property type="component" value="Chromosome 5"/>
</dbReference>
<dbReference type="ExpressionAtlas" id="Q9FHZ3">
    <property type="expression patterns" value="baseline and differential"/>
</dbReference>
<dbReference type="GO" id="GO:0005634">
    <property type="term" value="C:nucleus"/>
    <property type="evidence" value="ECO:0007669"/>
    <property type="project" value="UniProtKB-SubCell"/>
</dbReference>
<dbReference type="InterPro" id="IPR008889">
    <property type="entry name" value="VQ"/>
</dbReference>
<dbReference type="InterPro" id="IPR039611">
    <property type="entry name" value="VQ_4/11/13/19/31/33"/>
</dbReference>
<dbReference type="PANTHER" id="PTHR33402">
    <property type="entry name" value="VQ MOTIF-CONTAINING PROTEIN 11-LIKE"/>
    <property type="match status" value="1"/>
</dbReference>
<dbReference type="PANTHER" id="PTHR33402:SF17">
    <property type="entry name" value="VQ MOTIF-CONTAINING PROTEIN 33"/>
    <property type="match status" value="1"/>
</dbReference>
<dbReference type="Pfam" id="PF05678">
    <property type="entry name" value="VQ"/>
    <property type="match status" value="1"/>
</dbReference>
<organism>
    <name type="scientific">Arabidopsis thaliana</name>
    <name type="common">Mouse-ear cress</name>
    <dbReference type="NCBI Taxonomy" id="3702"/>
    <lineage>
        <taxon>Eukaryota</taxon>
        <taxon>Viridiplantae</taxon>
        <taxon>Streptophyta</taxon>
        <taxon>Embryophyta</taxon>
        <taxon>Tracheophyta</taxon>
        <taxon>Spermatophyta</taxon>
        <taxon>Magnoliopsida</taxon>
        <taxon>eudicotyledons</taxon>
        <taxon>Gunneridae</taxon>
        <taxon>Pentapetalae</taxon>
        <taxon>rosids</taxon>
        <taxon>malvids</taxon>
        <taxon>Brassicales</taxon>
        <taxon>Brassicaceae</taxon>
        <taxon>Camelineae</taxon>
        <taxon>Arabidopsis</taxon>
    </lineage>
</organism>
<reference key="1">
    <citation type="journal article" date="1999" name="DNA Res.">
        <title>Structural analysis of Arabidopsis thaliana chromosome 5. IX. Sequence features of the regions of 1,011,550 bp covered by seventeen P1 and TAC clones.</title>
        <authorList>
            <person name="Kaneko T."/>
            <person name="Katoh T."/>
            <person name="Sato S."/>
            <person name="Nakamura Y."/>
            <person name="Asamizu E."/>
            <person name="Kotani H."/>
            <person name="Miyajima N."/>
            <person name="Tabata S."/>
        </authorList>
    </citation>
    <scope>NUCLEOTIDE SEQUENCE [LARGE SCALE GENOMIC DNA]</scope>
    <source>
        <strain>cv. Columbia</strain>
    </source>
</reference>
<reference key="2">
    <citation type="journal article" date="2017" name="Plant J.">
        <title>Araport11: a complete reannotation of the Arabidopsis thaliana reference genome.</title>
        <authorList>
            <person name="Cheng C.Y."/>
            <person name="Krishnakumar V."/>
            <person name="Chan A.P."/>
            <person name="Thibaud-Nissen F."/>
            <person name="Schobel S."/>
            <person name="Town C.D."/>
        </authorList>
    </citation>
    <scope>GENOME REANNOTATION</scope>
    <source>
        <strain>cv. Columbia</strain>
    </source>
</reference>
<reference key="3">
    <citation type="journal article" date="2003" name="Science">
        <title>Empirical analysis of transcriptional activity in the Arabidopsis genome.</title>
        <authorList>
            <person name="Yamada K."/>
            <person name="Lim J."/>
            <person name="Dale J.M."/>
            <person name="Chen H."/>
            <person name="Shinn P."/>
            <person name="Palm C.J."/>
            <person name="Southwick A.M."/>
            <person name="Wu H.C."/>
            <person name="Kim C.J."/>
            <person name="Nguyen M."/>
            <person name="Pham P.K."/>
            <person name="Cheuk R.F."/>
            <person name="Karlin-Newmann G."/>
            <person name="Liu S.X."/>
            <person name="Lam B."/>
            <person name="Sakano H."/>
            <person name="Wu T."/>
            <person name="Yu G."/>
            <person name="Miranda M."/>
            <person name="Quach H.L."/>
            <person name="Tripp M."/>
            <person name="Chang C.H."/>
            <person name="Lee J.M."/>
            <person name="Toriumi M.J."/>
            <person name="Chan M.M."/>
            <person name="Tang C.C."/>
            <person name="Onodera C.S."/>
            <person name="Deng J.M."/>
            <person name="Akiyama K."/>
            <person name="Ansari Y."/>
            <person name="Arakawa T."/>
            <person name="Banh J."/>
            <person name="Banno F."/>
            <person name="Bowser L."/>
            <person name="Brooks S.Y."/>
            <person name="Carninci P."/>
            <person name="Chao Q."/>
            <person name="Choy N."/>
            <person name="Enju A."/>
            <person name="Goldsmith A.D."/>
            <person name="Gurjal M."/>
            <person name="Hansen N.F."/>
            <person name="Hayashizaki Y."/>
            <person name="Johnson-Hopson C."/>
            <person name="Hsuan V.W."/>
            <person name="Iida K."/>
            <person name="Karnes M."/>
            <person name="Khan S."/>
            <person name="Koesema E."/>
            <person name="Ishida J."/>
            <person name="Jiang P.X."/>
            <person name="Jones T."/>
            <person name="Kawai J."/>
            <person name="Kamiya A."/>
            <person name="Meyers C."/>
            <person name="Nakajima M."/>
            <person name="Narusaka M."/>
            <person name="Seki M."/>
            <person name="Sakurai T."/>
            <person name="Satou M."/>
            <person name="Tamse R."/>
            <person name="Vaysberg M."/>
            <person name="Wallender E.K."/>
            <person name="Wong C."/>
            <person name="Yamamura Y."/>
            <person name="Yuan S."/>
            <person name="Shinozaki K."/>
            <person name="Davis R.W."/>
            <person name="Theologis A."/>
            <person name="Ecker J.R."/>
        </authorList>
    </citation>
    <scope>NUCLEOTIDE SEQUENCE [LARGE SCALE MRNA]</scope>
    <source>
        <strain>cv. Columbia</strain>
    </source>
</reference>
<reference key="4">
    <citation type="journal article" date="2009" name="J. Proteomics">
        <title>Phosphoproteomic analysis of nuclei-enriched fractions from Arabidopsis thaliana.</title>
        <authorList>
            <person name="Jones A.M.E."/>
            <person name="MacLean D."/>
            <person name="Studholme D.J."/>
            <person name="Serna-Sanz A."/>
            <person name="Andreasson E."/>
            <person name="Rathjen J.P."/>
            <person name="Peck S.C."/>
        </authorList>
    </citation>
    <scope>IDENTIFICATION BY MASS SPECTROMETRY [LARGE SCALE ANALYSIS]</scope>
    <source>
        <strain>cv. Columbia</strain>
    </source>
</reference>
<reference key="5">
    <citation type="journal article" date="2012" name="Plant Physiol.">
        <title>Structural and functional analysis of VQ motif-containing proteins in Arabidopsis as interacting proteins of WRKY transcription factors.</title>
        <authorList>
            <person name="Cheng Y."/>
            <person name="Zhou Y."/>
            <person name="Yang Y."/>
            <person name="Chi Y.J."/>
            <person name="Zhou J."/>
            <person name="Chen J.Y."/>
            <person name="Wang F."/>
            <person name="Fan B."/>
            <person name="Shi K."/>
            <person name="Zhou Y.H."/>
            <person name="Yu J.Q."/>
            <person name="Chen Z."/>
        </authorList>
    </citation>
    <scope>GENE FAMILY</scope>
    <scope>NOMENCLATURE</scope>
</reference>
<reference key="6">
    <citation type="journal article" date="2014" name="New Phytol.">
        <title>The Arabidopsis thaliana mitogen-activated protein kinases MPK3 and MPK6 target a subclass of 'VQ-motif'-containing proteins to regulate immune responses.</title>
        <authorList>
            <person name="Pecher P."/>
            <person name="Eschen-Lippold L."/>
            <person name="Herklotz S."/>
            <person name="Kuhle K."/>
            <person name="Naumann K."/>
            <person name="Bethke G."/>
            <person name="Uhrig J."/>
            <person name="Weyhe M."/>
            <person name="Scheel D."/>
            <person name="Lee J."/>
        </authorList>
    </citation>
    <scope>IDENTIFICATION BY MASS SPECTROMETRY</scope>
    <scope>PHOSPHORYLATION AT SER-83; THR-139; SER-148; SER-152; SER-165; SER-178; THR-181; SER-218; SER-221; THR-222 AND SER-238</scope>
</reference>
<feature type="chain" id="PRO_0000432322" description="VQ motif-containing protein 33">
    <location>
        <begin position="1"/>
        <end position="243"/>
    </location>
</feature>
<feature type="region of interest" description="Disordered" evidence="4">
    <location>
        <begin position="1"/>
        <end position="49"/>
    </location>
</feature>
<feature type="region of interest" description="Disordered" evidence="4">
    <location>
        <begin position="69"/>
        <end position="98"/>
    </location>
</feature>
<feature type="region of interest" description="Disordered" evidence="4">
    <location>
        <begin position="138"/>
        <end position="162"/>
    </location>
</feature>
<feature type="region of interest" description="Disordered" evidence="4">
    <location>
        <begin position="180"/>
        <end position="243"/>
    </location>
</feature>
<feature type="short sequence motif" description="VQ" evidence="8">
    <location>
        <begin position="59"/>
        <end position="68"/>
    </location>
</feature>
<feature type="compositionally biased region" description="Polar residues" evidence="4">
    <location>
        <begin position="1"/>
        <end position="16"/>
    </location>
</feature>
<feature type="compositionally biased region" description="Polar residues" evidence="4">
    <location>
        <begin position="84"/>
        <end position="98"/>
    </location>
</feature>
<feature type="compositionally biased region" description="Low complexity" evidence="4">
    <location>
        <begin position="149"/>
        <end position="162"/>
    </location>
</feature>
<feature type="compositionally biased region" description="Polar residues" evidence="4">
    <location>
        <begin position="191"/>
        <end position="201"/>
    </location>
</feature>
<feature type="modified residue" description="Phosphoserine" evidence="5">
    <location>
        <position position="83"/>
    </location>
</feature>
<feature type="modified residue" description="Phosphoserine" evidence="1">
    <location>
        <position position="95"/>
    </location>
</feature>
<feature type="modified residue" description="Phosphothreonine" evidence="5">
    <location>
        <position position="139"/>
    </location>
</feature>
<feature type="modified residue" description="Phosphoserine" evidence="5">
    <location>
        <position position="148"/>
    </location>
</feature>
<feature type="modified residue" description="Phosphoserine" evidence="5">
    <location>
        <position position="152"/>
    </location>
</feature>
<feature type="modified residue" description="Phosphoserine" evidence="5">
    <location>
        <position position="165"/>
    </location>
</feature>
<feature type="modified residue" description="Phosphoserine" evidence="2">
    <location>
        <position position="167"/>
    </location>
</feature>
<feature type="modified residue" description="Phosphoserine" evidence="5">
    <location>
        <position position="178"/>
    </location>
</feature>
<feature type="modified residue" description="Phosphothreonine" evidence="5">
    <location>
        <position position="181"/>
    </location>
</feature>
<feature type="modified residue" description="Phosphoserine" evidence="5">
    <location>
        <position position="218"/>
    </location>
</feature>
<feature type="modified residue" description="Phosphoserine" evidence="5">
    <location>
        <position position="221"/>
    </location>
</feature>
<feature type="modified residue" description="Phosphothreonine" evidence="5">
    <location>
        <position position="222"/>
    </location>
</feature>
<feature type="modified residue" description="Phosphoserine" evidence="5">
    <location>
        <position position="238"/>
    </location>
</feature>
<evidence type="ECO:0000250" key="1">
    <source>
        <dbReference type="UniProtKB" id="Q5M750"/>
    </source>
</evidence>
<evidence type="ECO:0000250" key="2">
    <source>
        <dbReference type="UniProtKB" id="Q9LDZ1"/>
    </source>
</evidence>
<evidence type="ECO:0000250" key="3">
    <source>
        <dbReference type="UniProtKB" id="Q9M9F0"/>
    </source>
</evidence>
<evidence type="ECO:0000256" key="4">
    <source>
        <dbReference type="SAM" id="MobiDB-lite"/>
    </source>
</evidence>
<evidence type="ECO:0000269" key="5">
    <source>
    </source>
</evidence>
<evidence type="ECO:0000303" key="6">
    <source>
    </source>
</evidence>
<evidence type="ECO:0000303" key="7">
    <source>
    </source>
</evidence>
<evidence type="ECO:0000305" key="8"/>
<evidence type="ECO:0000312" key="9">
    <source>
        <dbReference type="Araport" id="AT5G53830"/>
    </source>
</evidence>
<evidence type="ECO:0000312" key="10">
    <source>
        <dbReference type="EMBL" id="BAB09555.1"/>
    </source>
</evidence>
<sequence length="243" mass="26919">MEVSTSSMSSKPEQMQNPPPMISSPRFQPQIISPHHHDQHQHLSNPYPTTFVQADTSTFKQVVQMLTGSSTDTTTGKHHEAPSPVNNNNKGSSFSIPPIKKTNSFKLYERRQNNNNMFAKNDLMINTLRLQNSQRLMFTGGNSSHHQSPRFSPRNSSSSENILLSPSMLDFPKLGLNSPVTPLRSNDDPFNKSSPLSLGNSSEEDKAIADKGFYLHPSPVSTPRDSQPLLLPLFPVASPARNS</sequence>
<proteinExistence type="evidence at protein level"/>
<gene>
    <name evidence="6" type="primary">VQ33</name>
    <name evidence="7" type="synonym">MVQ3</name>
    <name evidence="9" type="ordered locus">At5g53830</name>
    <name evidence="10" type="ORF">MGN6.22</name>
</gene>
<name>VQ33_ARATH</name>